<proteinExistence type="inferred from homology"/>
<accession>B5RM42</accession>
<gene>
    <name evidence="1" type="primary">rpsC</name>
    <name type="ordered locus">BDU_487</name>
</gene>
<name>RS3_BORDL</name>
<protein>
    <recommendedName>
        <fullName evidence="1">Small ribosomal subunit protein uS3</fullName>
    </recommendedName>
    <alternativeName>
        <fullName evidence="2">30S ribosomal protein S3</fullName>
    </alternativeName>
</protein>
<keyword id="KW-0687">Ribonucleoprotein</keyword>
<keyword id="KW-0689">Ribosomal protein</keyword>
<keyword id="KW-0694">RNA-binding</keyword>
<keyword id="KW-0699">rRNA-binding</keyword>
<organism>
    <name type="scientific">Borrelia duttonii (strain Ly)</name>
    <dbReference type="NCBI Taxonomy" id="412419"/>
    <lineage>
        <taxon>Bacteria</taxon>
        <taxon>Pseudomonadati</taxon>
        <taxon>Spirochaetota</taxon>
        <taxon>Spirochaetia</taxon>
        <taxon>Spirochaetales</taxon>
        <taxon>Borreliaceae</taxon>
        <taxon>Borrelia</taxon>
    </lineage>
</organism>
<feature type="chain" id="PRO_1000140925" description="Small ribosomal subunit protein uS3">
    <location>
        <begin position="1"/>
        <end position="276"/>
    </location>
</feature>
<feature type="domain" description="KH type-2" evidence="1">
    <location>
        <begin position="39"/>
        <end position="110"/>
    </location>
</feature>
<comment type="function">
    <text evidence="1">Binds the lower part of the 30S subunit head. Binds mRNA in the 70S ribosome, positioning it for translation.</text>
</comment>
<comment type="subunit">
    <text evidence="1">Part of the 30S ribosomal subunit. Forms a tight complex with proteins S10 and S14.</text>
</comment>
<comment type="similarity">
    <text evidence="1">Belongs to the universal ribosomal protein uS3 family.</text>
</comment>
<reference key="1">
    <citation type="journal article" date="2008" name="PLoS Genet.">
        <title>The genome of Borrelia recurrentis, the agent of deadly louse-borne relapsing fever, is a degraded subset of tick-borne Borrelia duttonii.</title>
        <authorList>
            <person name="Lescot M."/>
            <person name="Audic S."/>
            <person name="Robert C."/>
            <person name="Nguyen T.T."/>
            <person name="Blanc G."/>
            <person name="Cutler S.J."/>
            <person name="Wincker P."/>
            <person name="Couloux A."/>
            <person name="Claverie J.-M."/>
            <person name="Raoult D."/>
            <person name="Drancourt M."/>
        </authorList>
    </citation>
    <scope>NUCLEOTIDE SEQUENCE [LARGE SCALE GENOMIC DNA]</scope>
    <source>
        <strain>Ly</strain>
    </source>
</reference>
<dbReference type="EMBL" id="CP000976">
    <property type="protein sequence ID" value="ACH93428.1"/>
    <property type="molecule type" value="Genomic_DNA"/>
</dbReference>
<dbReference type="RefSeq" id="WP_012538238.1">
    <property type="nucleotide sequence ID" value="NC_011229.1"/>
</dbReference>
<dbReference type="SMR" id="B5RM42"/>
<dbReference type="STRING" id="412419.BDU_487"/>
<dbReference type="KEGG" id="bdu:BDU_487"/>
<dbReference type="eggNOG" id="COG0092">
    <property type="taxonomic scope" value="Bacteria"/>
</dbReference>
<dbReference type="HOGENOM" id="CLU_058591_0_2_12"/>
<dbReference type="OrthoDB" id="9806396at2"/>
<dbReference type="Proteomes" id="UP000000611">
    <property type="component" value="Chromosome"/>
</dbReference>
<dbReference type="GO" id="GO:0022627">
    <property type="term" value="C:cytosolic small ribosomal subunit"/>
    <property type="evidence" value="ECO:0007669"/>
    <property type="project" value="TreeGrafter"/>
</dbReference>
<dbReference type="GO" id="GO:0003729">
    <property type="term" value="F:mRNA binding"/>
    <property type="evidence" value="ECO:0007669"/>
    <property type="project" value="UniProtKB-UniRule"/>
</dbReference>
<dbReference type="GO" id="GO:0019843">
    <property type="term" value="F:rRNA binding"/>
    <property type="evidence" value="ECO:0007669"/>
    <property type="project" value="UniProtKB-UniRule"/>
</dbReference>
<dbReference type="GO" id="GO:0003735">
    <property type="term" value="F:structural constituent of ribosome"/>
    <property type="evidence" value="ECO:0007669"/>
    <property type="project" value="InterPro"/>
</dbReference>
<dbReference type="GO" id="GO:0006412">
    <property type="term" value="P:translation"/>
    <property type="evidence" value="ECO:0007669"/>
    <property type="project" value="UniProtKB-UniRule"/>
</dbReference>
<dbReference type="CDD" id="cd02412">
    <property type="entry name" value="KH-II_30S_S3"/>
    <property type="match status" value="1"/>
</dbReference>
<dbReference type="FunFam" id="3.30.300.20:FF:000001">
    <property type="entry name" value="30S ribosomal protein S3"/>
    <property type="match status" value="1"/>
</dbReference>
<dbReference type="Gene3D" id="3.30.300.20">
    <property type="match status" value="1"/>
</dbReference>
<dbReference type="Gene3D" id="3.30.1140.32">
    <property type="entry name" value="Ribosomal protein S3, C-terminal domain"/>
    <property type="match status" value="1"/>
</dbReference>
<dbReference type="HAMAP" id="MF_01309_B">
    <property type="entry name" value="Ribosomal_uS3_B"/>
    <property type="match status" value="1"/>
</dbReference>
<dbReference type="InterPro" id="IPR004087">
    <property type="entry name" value="KH_dom"/>
</dbReference>
<dbReference type="InterPro" id="IPR015946">
    <property type="entry name" value="KH_dom-like_a/b"/>
</dbReference>
<dbReference type="InterPro" id="IPR004044">
    <property type="entry name" value="KH_dom_type_2"/>
</dbReference>
<dbReference type="InterPro" id="IPR009019">
    <property type="entry name" value="KH_sf_prok-type"/>
</dbReference>
<dbReference type="InterPro" id="IPR036419">
    <property type="entry name" value="Ribosomal_S3_C_sf"/>
</dbReference>
<dbReference type="InterPro" id="IPR005704">
    <property type="entry name" value="Ribosomal_uS3_bac-typ"/>
</dbReference>
<dbReference type="InterPro" id="IPR001351">
    <property type="entry name" value="Ribosomal_uS3_C"/>
</dbReference>
<dbReference type="InterPro" id="IPR018280">
    <property type="entry name" value="Ribosomal_uS3_CS"/>
</dbReference>
<dbReference type="NCBIfam" id="TIGR01009">
    <property type="entry name" value="rpsC_bact"/>
    <property type="match status" value="1"/>
</dbReference>
<dbReference type="PANTHER" id="PTHR11760">
    <property type="entry name" value="30S/40S RIBOSOMAL PROTEIN S3"/>
    <property type="match status" value="1"/>
</dbReference>
<dbReference type="PANTHER" id="PTHR11760:SF19">
    <property type="entry name" value="SMALL RIBOSOMAL SUBUNIT PROTEIN US3C"/>
    <property type="match status" value="1"/>
</dbReference>
<dbReference type="Pfam" id="PF07650">
    <property type="entry name" value="KH_2"/>
    <property type="match status" value="1"/>
</dbReference>
<dbReference type="Pfam" id="PF00189">
    <property type="entry name" value="Ribosomal_S3_C"/>
    <property type="match status" value="1"/>
</dbReference>
<dbReference type="SMART" id="SM00322">
    <property type="entry name" value="KH"/>
    <property type="match status" value="1"/>
</dbReference>
<dbReference type="SUPFAM" id="SSF54814">
    <property type="entry name" value="Prokaryotic type KH domain (KH-domain type II)"/>
    <property type="match status" value="1"/>
</dbReference>
<dbReference type="SUPFAM" id="SSF54821">
    <property type="entry name" value="Ribosomal protein S3 C-terminal domain"/>
    <property type="match status" value="1"/>
</dbReference>
<dbReference type="PROSITE" id="PS50823">
    <property type="entry name" value="KH_TYPE_2"/>
    <property type="match status" value="1"/>
</dbReference>
<dbReference type="PROSITE" id="PS00548">
    <property type="entry name" value="RIBOSOMAL_S3"/>
    <property type="match status" value="1"/>
</dbReference>
<sequence length="276" mass="31477">MGQKVHPYSLRIKINRDWKSKWYFDKKLYSEILHEDFLIRRETMKFLKGIKFDISDIEIIRNNLQRVTVVISTPRPGSVIGVKGANLEKIGQLLTRKVSKKINIKIKEIKKPEFDAQIVANGIAKQLENRASYRKLLKSSLLSSISKGIQGIKIKVSGRLGGAEIARSFEVKEGRIPLHTLRANIDYGFAEAYTTYGVIGVKVWLFKGEILGKQINSDAGQVINRKPSKDKVERFDKGKIDDKGRKVVNDDKFSREKLEIGSRSKNDFKNKNDSDI</sequence>
<evidence type="ECO:0000255" key="1">
    <source>
        <dbReference type="HAMAP-Rule" id="MF_01309"/>
    </source>
</evidence>
<evidence type="ECO:0000305" key="2"/>